<protein>
    <recommendedName>
        <fullName evidence="1">Glyceraldehyde-3-phosphate dehydrogenase</fullName>
        <shortName evidence="1">GAPDH</shortName>
        <ecNumber evidence="1">1.2.1.12</ecNumber>
    </recommendedName>
    <alternativeName>
        <fullName evidence="1">NAD-dependent glyceraldehyde-3-phosphate dehydrogenase</fullName>
    </alternativeName>
</protein>
<keyword id="KW-0963">Cytoplasm</keyword>
<keyword id="KW-0324">Glycolysis</keyword>
<keyword id="KW-0520">NAD</keyword>
<keyword id="KW-0547">Nucleotide-binding</keyword>
<keyword id="KW-0560">Oxidoreductase</keyword>
<organism>
    <name type="scientific">Atlantibacter hermannii</name>
    <name type="common">Escherichia hermannii</name>
    <dbReference type="NCBI Taxonomy" id="565"/>
    <lineage>
        <taxon>Bacteria</taxon>
        <taxon>Pseudomonadati</taxon>
        <taxon>Pseudomonadota</taxon>
        <taxon>Gammaproteobacteria</taxon>
        <taxon>Enterobacterales</taxon>
        <taxon>Enterobacteriaceae</taxon>
        <taxon>Atlantibacter</taxon>
    </lineage>
</organism>
<sequence length="294" mass="31394">IVFRAAQTRSDIEIVAINDLLDAEYMAYMLKYDSTHGRFDGTVEVKDGHLVVNGKKIRVTAEKDPANLKWNEVGVDVVAEATGIFLTDETARKHITAGAKKVVLTGPSKDDTPMFVKGANFDKYNGQDIVSNASCTTNCLAPLAKVINDNFGIIEGLMTTVHATTATQKTVDGPSHKDWRGGRGAAQNIIPSSTGAAKAVGKVLPELNGKLTGMAFRVPTPNVSVVDLTVRLEKAASYEDIKKAIKAAAEGEMKGVLGYTEDDVVSTDFNGEVCTSVFDAKAGIALNDNFVKLV</sequence>
<evidence type="ECO:0000250" key="1">
    <source>
        <dbReference type="UniProtKB" id="P0A9B2"/>
    </source>
</evidence>
<evidence type="ECO:0000305" key="2"/>
<accession>P24750</accession>
<gene>
    <name type="primary">gap</name>
</gene>
<comment type="function">
    <text evidence="1">Catalyzes the oxidative phosphorylation of glyceraldehyde 3-phosphate (G3P) to 1,3-bisphosphoglycerate (BPG) using the cofactor NAD. The first reaction step involves the formation of a hemiacetal intermediate between G3P and a cysteine residue, and this hemiacetal intermediate is then oxidized to a thioester, with concomitant reduction of NAD to NADH. The reduced NADH is then exchanged with the second NAD, and the thioester is attacked by a nucleophilic inorganic phosphate to produce BPG.</text>
</comment>
<comment type="catalytic activity">
    <reaction evidence="1">
        <text>D-glyceraldehyde 3-phosphate + phosphate + NAD(+) = (2R)-3-phospho-glyceroyl phosphate + NADH + H(+)</text>
        <dbReference type="Rhea" id="RHEA:10300"/>
        <dbReference type="ChEBI" id="CHEBI:15378"/>
        <dbReference type="ChEBI" id="CHEBI:43474"/>
        <dbReference type="ChEBI" id="CHEBI:57540"/>
        <dbReference type="ChEBI" id="CHEBI:57604"/>
        <dbReference type="ChEBI" id="CHEBI:57945"/>
        <dbReference type="ChEBI" id="CHEBI:59776"/>
        <dbReference type="EC" id="1.2.1.12"/>
    </reaction>
</comment>
<comment type="pathway">
    <text evidence="2">Carbohydrate degradation; glycolysis; pyruvate from D-glyceraldehyde 3-phosphate: step 1/5.</text>
</comment>
<comment type="subunit">
    <text evidence="1">Homotetramer.</text>
</comment>
<comment type="subcellular location">
    <subcellularLocation>
        <location evidence="2">Cytoplasm</location>
    </subcellularLocation>
</comment>
<comment type="similarity">
    <text evidence="2">Belongs to the glyceraldehyde-3-phosphate dehydrogenase family.</text>
</comment>
<feature type="chain" id="PRO_0000145658" description="Glyceraldehyde-3-phosphate dehydrogenase">
    <location>
        <begin position="1" status="less than"/>
        <end position="294" status="greater than"/>
    </location>
</feature>
<feature type="active site" description="Nucleophile" evidence="1">
    <location>
        <position position="135"/>
    </location>
</feature>
<feature type="binding site" evidence="1">
    <location>
        <position position="19"/>
    </location>
    <ligand>
        <name>NAD(+)</name>
        <dbReference type="ChEBI" id="CHEBI:57540"/>
    </ligand>
</feature>
<feature type="binding site" evidence="1">
    <location>
        <position position="63"/>
    </location>
    <ligand>
        <name>NAD(+)</name>
        <dbReference type="ChEBI" id="CHEBI:57540"/>
    </ligand>
</feature>
<feature type="binding site" evidence="1">
    <location>
        <position position="105"/>
    </location>
    <ligand>
        <name>NAD(+)</name>
        <dbReference type="ChEBI" id="CHEBI:57540"/>
    </ligand>
</feature>
<feature type="binding site" evidence="1">
    <location>
        <begin position="134"/>
        <end position="136"/>
    </location>
    <ligand>
        <name>D-glyceraldehyde 3-phosphate</name>
        <dbReference type="ChEBI" id="CHEBI:59776"/>
    </ligand>
</feature>
<feature type="binding site" evidence="1">
    <location>
        <position position="165"/>
    </location>
    <ligand>
        <name>D-glyceraldehyde 3-phosphate</name>
        <dbReference type="ChEBI" id="CHEBI:59776"/>
    </ligand>
</feature>
<feature type="binding site" evidence="1">
    <location>
        <begin position="194"/>
        <end position="195"/>
    </location>
    <ligand>
        <name>D-glyceraldehyde 3-phosphate</name>
        <dbReference type="ChEBI" id="CHEBI:59776"/>
    </ligand>
</feature>
<feature type="binding site" evidence="1">
    <location>
        <position position="217"/>
    </location>
    <ligand>
        <name>D-glyceraldehyde 3-phosphate</name>
        <dbReference type="ChEBI" id="CHEBI:59776"/>
    </ligand>
</feature>
<feature type="site" description="Activates thiol group during catalysis" evidence="1">
    <location>
        <position position="162"/>
    </location>
</feature>
<feature type="non-terminal residue">
    <location>
        <position position="1"/>
    </location>
</feature>
<feature type="non-terminal residue">
    <location>
        <position position="294"/>
    </location>
</feature>
<dbReference type="EC" id="1.2.1.12" evidence="1"/>
<dbReference type="EMBL" id="M63361">
    <property type="protein sequence ID" value="AAA23851.1"/>
    <property type="molecule type" value="Genomic_DNA"/>
</dbReference>
<dbReference type="EMBL" id="M63362">
    <property type="protein sequence ID" value="AAA23854.1"/>
    <property type="molecule type" value="Genomic_DNA"/>
</dbReference>
<dbReference type="PIR" id="I41222">
    <property type="entry name" value="I41222"/>
</dbReference>
<dbReference type="SMR" id="P24750"/>
<dbReference type="UniPathway" id="UPA00109">
    <property type="reaction ID" value="UER00184"/>
</dbReference>
<dbReference type="GO" id="GO:0005737">
    <property type="term" value="C:cytoplasm"/>
    <property type="evidence" value="ECO:0007669"/>
    <property type="project" value="UniProtKB-SubCell"/>
</dbReference>
<dbReference type="GO" id="GO:0004365">
    <property type="term" value="F:glyceraldehyde-3-phosphate dehydrogenase (NAD+) (phosphorylating) activity"/>
    <property type="evidence" value="ECO:0000250"/>
    <property type="project" value="UniProtKB"/>
</dbReference>
<dbReference type="GO" id="GO:0051287">
    <property type="term" value="F:NAD binding"/>
    <property type="evidence" value="ECO:0000250"/>
    <property type="project" value="UniProtKB"/>
</dbReference>
<dbReference type="GO" id="GO:0050661">
    <property type="term" value="F:NADP binding"/>
    <property type="evidence" value="ECO:0007669"/>
    <property type="project" value="InterPro"/>
</dbReference>
<dbReference type="GO" id="GO:0006006">
    <property type="term" value="P:glucose metabolic process"/>
    <property type="evidence" value="ECO:0007669"/>
    <property type="project" value="InterPro"/>
</dbReference>
<dbReference type="GO" id="GO:0006096">
    <property type="term" value="P:glycolytic process"/>
    <property type="evidence" value="ECO:0007669"/>
    <property type="project" value="UniProtKB-UniPathway"/>
</dbReference>
<dbReference type="CDD" id="cd18126">
    <property type="entry name" value="GAPDH_I_C"/>
    <property type="match status" value="1"/>
</dbReference>
<dbReference type="CDD" id="cd05214">
    <property type="entry name" value="GAPDH_I_N"/>
    <property type="match status" value="1"/>
</dbReference>
<dbReference type="FunFam" id="3.30.360.10:FF:000001">
    <property type="entry name" value="Glyceraldehyde-3-phosphate dehydrogenase"/>
    <property type="match status" value="1"/>
</dbReference>
<dbReference type="FunFam" id="3.40.50.720:FF:000001">
    <property type="entry name" value="Glyceraldehyde-3-phosphate dehydrogenase"/>
    <property type="match status" value="1"/>
</dbReference>
<dbReference type="Gene3D" id="3.30.360.10">
    <property type="entry name" value="Dihydrodipicolinate Reductase, domain 2"/>
    <property type="match status" value="1"/>
</dbReference>
<dbReference type="Gene3D" id="3.40.50.720">
    <property type="entry name" value="NAD(P)-binding Rossmann-like Domain"/>
    <property type="match status" value="1"/>
</dbReference>
<dbReference type="InterPro" id="IPR020831">
    <property type="entry name" value="GlycerAld/Erythrose_P_DH"/>
</dbReference>
<dbReference type="InterPro" id="IPR020830">
    <property type="entry name" value="GlycerAld_3-P_DH_AS"/>
</dbReference>
<dbReference type="InterPro" id="IPR020829">
    <property type="entry name" value="GlycerAld_3-P_DH_cat"/>
</dbReference>
<dbReference type="InterPro" id="IPR020828">
    <property type="entry name" value="GlycerAld_3-P_DH_NAD(P)-bd"/>
</dbReference>
<dbReference type="InterPro" id="IPR006424">
    <property type="entry name" value="Glyceraldehyde-3-P_DH_1"/>
</dbReference>
<dbReference type="InterPro" id="IPR036291">
    <property type="entry name" value="NAD(P)-bd_dom_sf"/>
</dbReference>
<dbReference type="NCBIfam" id="TIGR01534">
    <property type="entry name" value="GAPDH-I"/>
    <property type="match status" value="1"/>
</dbReference>
<dbReference type="NCBIfam" id="NF011954">
    <property type="entry name" value="PRK15425.1"/>
    <property type="match status" value="1"/>
</dbReference>
<dbReference type="PANTHER" id="PTHR10836">
    <property type="entry name" value="GLYCERALDEHYDE 3-PHOSPHATE DEHYDROGENASE"/>
    <property type="match status" value="1"/>
</dbReference>
<dbReference type="PANTHER" id="PTHR10836:SF76">
    <property type="entry name" value="GLYCERALDEHYDE-3-PHOSPHATE DEHYDROGENASE-RELATED"/>
    <property type="match status" value="1"/>
</dbReference>
<dbReference type="Pfam" id="PF02800">
    <property type="entry name" value="Gp_dh_C"/>
    <property type="match status" value="1"/>
</dbReference>
<dbReference type="Pfam" id="PF00044">
    <property type="entry name" value="Gp_dh_N"/>
    <property type="match status" value="1"/>
</dbReference>
<dbReference type="PIRSF" id="PIRSF000149">
    <property type="entry name" value="GAP_DH"/>
    <property type="match status" value="1"/>
</dbReference>
<dbReference type="PRINTS" id="PR00078">
    <property type="entry name" value="G3PDHDRGNASE"/>
</dbReference>
<dbReference type="SMART" id="SM00846">
    <property type="entry name" value="Gp_dh_N"/>
    <property type="match status" value="1"/>
</dbReference>
<dbReference type="SUPFAM" id="SSF55347">
    <property type="entry name" value="Glyceraldehyde-3-phosphate dehydrogenase-like, C-terminal domain"/>
    <property type="match status" value="1"/>
</dbReference>
<dbReference type="SUPFAM" id="SSF51735">
    <property type="entry name" value="NAD(P)-binding Rossmann-fold domains"/>
    <property type="match status" value="1"/>
</dbReference>
<dbReference type="PROSITE" id="PS00071">
    <property type="entry name" value="GAPDH"/>
    <property type="match status" value="1"/>
</dbReference>
<name>G3P_ATLHE</name>
<reference key="1">
    <citation type="journal article" date="1991" name="J. Gen. Microbiol.">
        <title>Molecular and evolutionary relationships among enteric bacteria.</title>
        <authorList>
            <person name="Lawrence J.G."/>
            <person name="Ochman H."/>
            <person name="Hartl D.L."/>
        </authorList>
    </citation>
    <scope>NUCLEOTIDE SEQUENCE [GENOMIC DNA]</scope>
    <source>
        <strain>ATCC 33650 / DSM 4560 / CCUG 15714 / JCM 1473 / NBRC 105704 / NCTC 12129 / CDC 980-72</strain>
        <strain>ATCC 33652 / CDC 1479-80</strain>
    </source>
</reference>
<proteinExistence type="inferred from homology"/>